<feature type="chain" id="PRO_0000143298" description="Maturase K">
    <location>
        <begin position="1"/>
        <end position="507"/>
    </location>
</feature>
<organism>
    <name type="scientific">Calocedrus decurrens</name>
    <name type="common">California incense-cedar</name>
    <name type="synonym">Libocedrus decurrens</name>
    <dbReference type="NCBI Taxonomy" id="13387"/>
    <lineage>
        <taxon>Eukaryota</taxon>
        <taxon>Viridiplantae</taxon>
        <taxon>Streptophyta</taxon>
        <taxon>Embryophyta</taxon>
        <taxon>Tracheophyta</taxon>
        <taxon>Spermatophyta</taxon>
        <taxon>Pinopsida</taxon>
        <taxon>Pinidae</taxon>
        <taxon>Conifers II</taxon>
        <taxon>Cupressales</taxon>
        <taxon>Cupressaceae</taxon>
        <taxon>Calocedrus</taxon>
    </lineage>
</organism>
<proteinExistence type="inferred from homology"/>
<keyword id="KW-0150">Chloroplast</keyword>
<keyword id="KW-0507">mRNA processing</keyword>
<keyword id="KW-0934">Plastid</keyword>
<keyword id="KW-0694">RNA-binding</keyword>
<keyword id="KW-0819">tRNA processing</keyword>
<reference key="1">
    <citation type="journal article" date="2000" name="Mol. Phylogenet. Evol.">
        <title>Phylogeny of taxaceae and Cephalotaxaceae genera inferred from chloroplast matK gene and nuclear rDNA ITS region.</title>
        <authorList>
            <person name="Cheng Y."/>
            <person name="Nicolson R.G."/>
            <person name="Tripp K."/>
            <person name="Chaw S."/>
        </authorList>
    </citation>
    <scope>NUCLEOTIDE SEQUENCE [GENOMIC DNA]</scope>
    <source>
        <tissue>Leaf</tissue>
    </source>
</reference>
<comment type="function">
    <text evidence="1">Usually encoded in the trnK tRNA gene intron. Probably assists in splicing its own and other chloroplast group II introns.</text>
</comment>
<comment type="subcellular location">
    <subcellularLocation>
        <location>Plastid</location>
        <location>Chloroplast</location>
    </subcellularLocation>
</comment>
<comment type="similarity">
    <text evidence="1">Belongs to the intron maturase 2 family. MatK subfamily.</text>
</comment>
<gene>
    <name evidence="1" type="primary">matK</name>
</gene>
<dbReference type="EMBL" id="AB023982">
    <property type="protein sequence ID" value="BAA86039.1"/>
    <property type="molecule type" value="Genomic_DNA"/>
</dbReference>
<dbReference type="RefSeq" id="YP_009726973.1">
    <property type="nucleotide sequence ID" value="NC_045867.1"/>
</dbReference>
<dbReference type="GeneID" id="43962287"/>
<dbReference type="GO" id="GO:0009507">
    <property type="term" value="C:chloroplast"/>
    <property type="evidence" value="ECO:0007669"/>
    <property type="project" value="UniProtKB-SubCell"/>
</dbReference>
<dbReference type="GO" id="GO:0003723">
    <property type="term" value="F:RNA binding"/>
    <property type="evidence" value="ECO:0007669"/>
    <property type="project" value="UniProtKB-KW"/>
</dbReference>
<dbReference type="GO" id="GO:0006397">
    <property type="term" value="P:mRNA processing"/>
    <property type="evidence" value="ECO:0007669"/>
    <property type="project" value="UniProtKB-KW"/>
</dbReference>
<dbReference type="GO" id="GO:0008380">
    <property type="term" value="P:RNA splicing"/>
    <property type="evidence" value="ECO:0007669"/>
    <property type="project" value="UniProtKB-UniRule"/>
</dbReference>
<dbReference type="GO" id="GO:0008033">
    <property type="term" value="P:tRNA processing"/>
    <property type="evidence" value="ECO:0007669"/>
    <property type="project" value="UniProtKB-KW"/>
</dbReference>
<dbReference type="HAMAP" id="MF_01390">
    <property type="entry name" value="MatK"/>
    <property type="match status" value="1"/>
</dbReference>
<dbReference type="InterPro" id="IPR024937">
    <property type="entry name" value="Domain_X"/>
</dbReference>
<dbReference type="InterPro" id="IPR002866">
    <property type="entry name" value="Maturase_MatK"/>
</dbReference>
<dbReference type="InterPro" id="IPR024942">
    <property type="entry name" value="Maturase_MatK_N"/>
</dbReference>
<dbReference type="PANTHER" id="PTHR34811">
    <property type="entry name" value="MATURASE K"/>
    <property type="match status" value="1"/>
</dbReference>
<dbReference type="PANTHER" id="PTHR34811:SF1">
    <property type="entry name" value="MATURASE K"/>
    <property type="match status" value="1"/>
</dbReference>
<dbReference type="Pfam" id="PF01348">
    <property type="entry name" value="Intron_maturas2"/>
    <property type="match status" value="1"/>
</dbReference>
<dbReference type="Pfam" id="PF01824">
    <property type="entry name" value="MatK_N"/>
    <property type="match status" value="1"/>
</dbReference>
<accession>Q9MVW5</accession>
<name>MATK_CALDE</name>
<geneLocation type="chloroplast"/>
<sequence length="507" mass="60434">MDEFQRNSNKHRSWQQFFLYPLFFREDLYAIAHDHHLHRSGSSEPTEILVSNFVSFLTVKRSIRRIRKQNNSISLFGNSDSNKFIEYNKNFSFKSILEGFTIVLEVSFAMRSKHFIKGMDGWNSLRSIHCIFPFMEDKLPHSNYISDIRVPYSIHPEILVRIFRRWILDAPSLHLLRLILHECSFSRENLQKAMITQRENTRFSLFLWNSYVYECESFLIPLIKRFFNSQSLLYGSFPDRTHFEKKIKDIVLFPLQKISTKKIWLLKDSFIHYVRYGERSLIALKGTHLQVKKCRYHLFHFLQYYFHLWFQPYRICSLELSKTSFSFLGFFMHVKMRPLVVRAKMLDDLFITDLITNELNSTAPLKSILFSLAKEKFCDISGWPISKLSWTSLSDDDILDRFDRIWINLFHYYSGSINQDGLYHIKYILLISCAKTLACKHKSTIRVVREQLGSELFTKSFSKERESISSSFSKTRSQRERIWNSEISQITPLASFWQKMENKQIEN</sequence>
<evidence type="ECO:0000255" key="1">
    <source>
        <dbReference type="HAMAP-Rule" id="MF_01390"/>
    </source>
</evidence>
<protein>
    <recommendedName>
        <fullName evidence="1">Maturase K</fullName>
    </recommendedName>
    <alternativeName>
        <fullName evidence="1">Intron maturase</fullName>
    </alternativeName>
</protein>